<protein>
    <recommendedName>
        <fullName>Peptidase inhibitor 16</fullName>
        <shortName>PI-16</shortName>
    </recommendedName>
    <alternativeName>
        <fullName>Cysteine-rich protease inhibitor</fullName>
    </alternativeName>
    <cdAntigenName>CD364</cdAntigenName>
</protein>
<sequence>MHGSCSPWVMLPPPLLLLLLLIATGPTTALTEDEKQTMVDLHNQYRAQVSPPASDMLQMRWDDELAAFAKAYAQKCVWGHNKERGRRGENLFAITDEGMDVPLAVGNWHEEHEYYNFSTATCDPNQMCGHYTQVVWSKTERIGCGSHFCETLQGVEEANIHLLVCNYEPPGNVKGRKPYQEGTPCSQCPLGYSCENSLCEPMRNPEKAQDSPPRVTEVPSTRATEAPSSRETGTPSLATSETLHFSVTKVSDSLATESSPAVETKAPSSLATEGPSSMATEAQAFVTEVPLVSARHMQPSVDEGPVNFLTSTHIPVPKSMDEEASKSSATSVSPKKSLYPKMSLTESGESVPQIQEEAEPKDELSEPEAILPEAEAAPTEAEVELREPEAESPKAESPEAEAESPLSSEALVPVLPAQERGGQKASLEHSGHPASPSLPTFPSASGNATGGRTLALQSSWTGAENPEKADWDLKNSAHVWGPFLGLLLPSLLLLAGMV</sequence>
<keyword id="KW-0025">Alternative splicing</keyword>
<keyword id="KW-0325">Glycoprotein</keyword>
<keyword id="KW-0646">Protease inhibitor</keyword>
<keyword id="KW-1185">Reference proteome</keyword>
<keyword id="KW-0964">Secreted</keyword>
<keyword id="KW-0732">Signal</keyword>
<proteinExistence type="evidence at protein level"/>
<accession>Q9ET66</accession>
<accession>Q148Q6</accession>
<accession>Q8CHU4</accession>
<accession>Q9JJ56</accession>
<feature type="signal peptide" evidence="1">
    <location>
        <begin position="1"/>
        <end position="29"/>
    </location>
</feature>
<feature type="chain" id="PRO_0000287634" description="Peptidase inhibitor 16">
    <location>
        <begin position="30"/>
        <end position="498"/>
    </location>
</feature>
<feature type="domain" description="SCP">
    <location>
        <begin position="39"/>
        <end position="167"/>
    </location>
</feature>
<feature type="region of interest" description="Disordered" evidence="4">
    <location>
        <begin position="204"/>
        <end position="277"/>
    </location>
</feature>
<feature type="region of interest" description="Disordered" evidence="4">
    <location>
        <begin position="317"/>
        <end position="407"/>
    </location>
</feature>
<feature type="region of interest" description="Disordered" evidence="4">
    <location>
        <begin position="419"/>
        <end position="467"/>
    </location>
</feature>
<feature type="compositionally biased region" description="Polar residues" evidence="4">
    <location>
        <begin position="218"/>
        <end position="277"/>
    </location>
</feature>
<feature type="compositionally biased region" description="Polar residues" evidence="4">
    <location>
        <begin position="344"/>
        <end position="353"/>
    </location>
</feature>
<feature type="compositionally biased region" description="Low complexity" evidence="4">
    <location>
        <begin position="367"/>
        <end position="380"/>
    </location>
</feature>
<feature type="compositionally biased region" description="Basic and acidic residues" evidence="4">
    <location>
        <begin position="383"/>
        <end position="397"/>
    </location>
</feature>
<feature type="compositionally biased region" description="Polar residues" evidence="4">
    <location>
        <begin position="437"/>
        <end position="447"/>
    </location>
</feature>
<feature type="glycosylation site" description="N-linked (GlcNAc...) asparagine" evidence="3">
    <location>
        <position position="116"/>
    </location>
</feature>
<feature type="glycosylation site" description="N-linked (GlcNAc...) asparagine" evidence="3">
    <location>
        <position position="447"/>
    </location>
</feature>
<feature type="splice variant" id="VSP_025575" description="In isoform 2." evidence="6">
    <location>
        <begin position="200"/>
        <end position="461"/>
    </location>
</feature>
<feature type="sequence conflict" description="In Ref. 1; BAB03398." evidence="7" ref="1">
    <original>T</original>
    <variation>I</variation>
    <location>
        <position position="248"/>
    </location>
</feature>
<comment type="function">
    <text evidence="5">May inhibit cardiomyocyte growth.</text>
</comment>
<comment type="subunit">
    <text evidence="2">Interacts with PSP94/MSMB.</text>
</comment>
<comment type="subcellular location">
    <subcellularLocation>
        <location evidence="5">Secreted</location>
    </subcellularLocation>
</comment>
<comment type="alternative products">
    <event type="alternative splicing"/>
    <isoform>
        <id>Q9ET66-1</id>
        <name>1</name>
        <sequence type="displayed"/>
    </isoform>
    <isoform>
        <id>Q9ET66-2</id>
        <name>2</name>
        <sequence type="described" ref="VSP_025575"/>
    </isoform>
</comment>
<comment type="tissue specificity">
    <text evidence="5">Expressed strongly in aorta and skin, and weakly in adipose tissue (at protein level). In heart, found in the extracellular space surrounding cardiomyocytes (at protein level).</text>
</comment>
<comment type="induction">
    <text evidence="5">Up-regulated in a mouse model of heart failure.</text>
</comment>
<comment type="PTM">
    <text evidence="5">N-glycosylated.</text>
</comment>
<comment type="similarity">
    <text evidence="7">Belongs to the CRISP family.</text>
</comment>
<comment type="sequence caution" evidence="7">
    <conflict type="erroneous initiation">
        <sequence resource="EMBL-CDS" id="AAH39124"/>
    </conflict>
    <text>Extended N-terminus.</text>
</comment>
<comment type="sequence caution" evidence="7">
    <conflict type="erroneous initiation">
        <sequence resource="EMBL-CDS" id="AAH39124"/>
    </conflict>
    <text>Truncated N-terminus.</text>
</comment>
<comment type="sequence caution" evidence="7">
    <conflict type="erroneous initiation">
        <sequence resource="EMBL-CDS" id="AAI18027"/>
    </conflict>
    <text>Truncated N-terminus.</text>
</comment>
<comment type="sequence caution" evidence="7">
    <conflict type="erroneous gene model prediction">
        <sequence resource="EMBL-CDS" id="AAP45197"/>
    </conflict>
</comment>
<comment type="sequence caution" evidence="7">
    <conflict type="erroneous initiation">
        <sequence resource="EMBL-CDS" id="BAB03398"/>
    </conflict>
    <text>Truncated N-terminus.</text>
</comment>
<comment type="sequence caution" evidence="7">
    <conflict type="erroneous gene model prediction">
        <sequence resource="EMBL-CDS" id="BAB03453"/>
    </conflict>
</comment>
<name>PI16_MOUSE</name>
<evidence type="ECO:0000250" key="1"/>
<evidence type="ECO:0000250" key="2">
    <source>
        <dbReference type="UniProtKB" id="Q6UXB8"/>
    </source>
</evidence>
<evidence type="ECO:0000255" key="3"/>
<evidence type="ECO:0000256" key="4">
    <source>
        <dbReference type="SAM" id="MobiDB-lite"/>
    </source>
</evidence>
<evidence type="ECO:0000269" key="5">
    <source>
    </source>
</evidence>
<evidence type="ECO:0000303" key="6">
    <source>
    </source>
</evidence>
<evidence type="ECO:0000305" key="7"/>
<gene>
    <name type="primary">Pi16</name>
    <name type="synonym">Cripi</name>
</gene>
<dbReference type="EMBL" id="AB046537">
    <property type="protein sequence ID" value="BAB03398.1"/>
    <property type="status" value="ALT_INIT"/>
    <property type="molecule type" value="mRNA"/>
</dbReference>
<dbReference type="EMBL" id="AB046539">
    <property type="protein sequence ID" value="BAB03453.1"/>
    <property type="status" value="ALT_SEQ"/>
    <property type="molecule type" value="Genomic_DNA"/>
</dbReference>
<dbReference type="EMBL" id="AY301264">
    <property type="protein sequence ID" value="AAP45197.1"/>
    <property type="status" value="ALT_SEQ"/>
    <property type="molecule type" value="Genomic_DNA"/>
</dbReference>
<dbReference type="EMBL" id="BC039124">
    <property type="protein sequence ID" value="AAH39124.1"/>
    <property type="status" value="ALT_INIT"/>
    <property type="molecule type" value="mRNA"/>
</dbReference>
<dbReference type="EMBL" id="BC118026">
    <property type="protein sequence ID" value="AAI18027.1"/>
    <property type="status" value="ALT_INIT"/>
    <property type="molecule type" value="mRNA"/>
</dbReference>
<dbReference type="CCDS" id="CCDS28595.2">
    <molecule id="Q9ET66-1"/>
</dbReference>
<dbReference type="RefSeq" id="NP_076223.3">
    <molecule id="Q9ET66-1"/>
    <property type="nucleotide sequence ID" value="NM_023734.3"/>
</dbReference>
<dbReference type="RefSeq" id="XP_006525077.1">
    <molecule id="Q9ET66-2"/>
    <property type="nucleotide sequence ID" value="XM_006525014.2"/>
</dbReference>
<dbReference type="SMR" id="Q9ET66"/>
<dbReference type="FunCoup" id="Q9ET66">
    <property type="interactions" value="283"/>
</dbReference>
<dbReference type="STRING" id="10090.ENSMUSP00000110349"/>
<dbReference type="GlyCosmos" id="Q9ET66">
    <property type="glycosylation" value="2 sites, No reported glycans"/>
</dbReference>
<dbReference type="GlyGen" id="Q9ET66">
    <property type="glycosylation" value="3 sites"/>
</dbReference>
<dbReference type="PhosphoSitePlus" id="Q9ET66"/>
<dbReference type="jPOST" id="Q9ET66"/>
<dbReference type="PaxDb" id="10090-ENSMUSP00000110349"/>
<dbReference type="PeptideAtlas" id="Q9ET66"/>
<dbReference type="ProteomicsDB" id="289557">
    <molecule id="Q9ET66-1"/>
</dbReference>
<dbReference type="ProteomicsDB" id="289558">
    <molecule id="Q9ET66-2"/>
</dbReference>
<dbReference type="Antibodypedia" id="29743">
    <property type="antibodies" value="193 antibodies from 26 providers"/>
</dbReference>
<dbReference type="DNASU" id="74116"/>
<dbReference type="Ensembl" id="ENSMUST00000114701.10">
    <molecule id="Q9ET66-1"/>
    <property type="protein sequence ID" value="ENSMUSP00000110349.3"/>
    <property type="gene ID" value="ENSMUSG00000024011.18"/>
</dbReference>
<dbReference type="Ensembl" id="ENSMUST00000155348.3">
    <molecule id="Q9ET66-2"/>
    <property type="protein sequence ID" value="ENSMUSP00000116183.3"/>
    <property type="gene ID" value="ENSMUSG00000024011.18"/>
</dbReference>
<dbReference type="GeneID" id="74116"/>
<dbReference type="KEGG" id="mmu:74116"/>
<dbReference type="AGR" id="MGI:1921366"/>
<dbReference type="CTD" id="221476"/>
<dbReference type="MGI" id="MGI:1921366">
    <property type="gene designation" value="Pi16"/>
</dbReference>
<dbReference type="VEuPathDB" id="HostDB:ENSMUSG00000024011"/>
<dbReference type="eggNOG" id="KOG3017">
    <property type="taxonomic scope" value="Eukaryota"/>
</dbReference>
<dbReference type="GeneTree" id="ENSGT00940000162458"/>
<dbReference type="InParanoid" id="Q9ET66"/>
<dbReference type="OMA" id="QLAVEQW"/>
<dbReference type="OrthoDB" id="337038at2759"/>
<dbReference type="PhylomeDB" id="Q9ET66"/>
<dbReference type="BioGRID-ORCS" id="74116">
    <property type="hits" value="2 hits in 76 CRISPR screens"/>
</dbReference>
<dbReference type="PRO" id="PR:Q9ET66"/>
<dbReference type="Proteomes" id="UP000000589">
    <property type="component" value="Chromosome 17"/>
</dbReference>
<dbReference type="RNAct" id="Q9ET66">
    <property type="molecule type" value="protein"/>
</dbReference>
<dbReference type="Bgee" id="ENSMUSG00000024011">
    <property type="expression patterns" value="Expressed in granulocyte and 135 other cell types or tissues"/>
</dbReference>
<dbReference type="ExpressionAtlas" id="Q9ET66">
    <property type="expression patterns" value="baseline and differential"/>
</dbReference>
<dbReference type="GO" id="GO:0005615">
    <property type="term" value="C:extracellular space"/>
    <property type="evidence" value="ECO:0000314"/>
    <property type="project" value="MGI"/>
</dbReference>
<dbReference type="GO" id="GO:0030414">
    <property type="term" value="F:peptidase inhibitor activity"/>
    <property type="evidence" value="ECO:0007669"/>
    <property type="project" value="UniProtKB-KW"/>
</dbReference>
<dbReference type="GO" id="GO:0061052">
    <property type="term" value="P:negative regulation of cell growth involved in cardiac muscle cell development"/>
    <property type="evidence" value="ECO:0000314"/>
    <property type="project" value="MGI"/>
</dbReference>
<dbReference type="CDD" id="cd05559">
    <property type="entry name" value="CAP_PI16_HrTT-1"/>
    <property type="match status" value="1"/>
</dbReference>
<dbReference type="FunFam" id="3.40.33.10:FF:000011">
    <property type="entry name" value="Peptidase inhibitor 16"/>
    <property type="match status" value="1"/>
</dbReference>
<dbReference type="Gene3D" id="3.40.33.10">
    <property type="entry name" value="CAP"/>
    <property type="match status" value="1"/>
</dbReference>
<dbReference type="InterPro" id="IPR018244">
    <property type="entry name" value="Allrgn_V5/Tpx1_CS"/>
</dbReference>
<dbReference type="InterPro" id="IPR014044">
    <property type="entry name" value="CAP_dom"/>
</dbReference>
<dbReference type="InterPro" id="IPR035940">
    <property type="entry name" value="CAP_sf"/>
</dbReference>
<dbReference type="InterPro" id="IPR001283">
    <property type="entry name" value="CRISP-related"/>
</dbReference>
<dbReference type="PANTHER" id="PTHR10334">
    <property type="entry name" value="CYSTEINE-RICH SECRETORY PROTEIN-RELATED"/>
    <property type="match status" value="1"/>
</dbReference>
<dbReference type="Pfam" id="PF00188">
    <property type="entry name" value="CAP"/>
    <property type="match status" value="1"/>
</dbReference>
<dbReference type="PRINTS" id="PR00837">
    <property type="entry name" value="V5TPXLIKE"/>
</dbReference>
<dbReference type="SMART" id="SM00198">
    <property type="entry name" value="SCP"/>
    <property type="match status" value="1"/>
</dbReference>
<dbReference type="SUPFAM" id="SSF55797">
    <property type="entry name" value="PR-1-like"/>
    <property type="match status" value="1"/>
</dbReference>
<dbReference type="PROSITE" id="PS01009">
    <property type="entry name" value="CRISP_1"/>
    <property type="match status" value="1"/>
</dbReference>
<dbReference type="PROSITE" id="PS01010">
    <property type="entry name" value="CRISP_2"/>
    <property type="match status" value="1"/>
</dbReference>
<organism>
    <name type="scientific">Mus musculus</name>
    <name type="common">Mouse</name>
    <dbReference type="NCBI Taxonomy" id="10090"/>
    <lineage>
        <taxon>Eukaryota</taxon>
        <taxon>Metazoa</taxon>
        <taxon>Chordata</taxon>
        <taxon>Craniata</taxon>
        <taxon>Vertebrata</taxon>
        <taxon>Euteleostomi</taxon>
        <taxon>Mammalia</taxon>
        <taxon>Eutheria</taxon>
        <taxon>Euarchontoglires</taxon>
        <taxon>Glires</taxon>
        <taxon>Rodentia</taxon>
        <taxon>Myomorpha</taxon>
        <taxon>Muroidea</taxon>
        <taxon>Muridae</taxon>
        <taxon>Murinae</taxon>
        <taxon>Mus</taxon>
        <taxon>Mus</taxon>
    </lineage>
</organism>
<reference key="1">
    <citation type="submission" date="2000-07" db="EMBL/GenBank/DDBJ databases">
        <title>Genomic structure of murine cysteine-rich protease inhibitor gene.</title>
        <authorList>
            <person name="Jang J.S."/>
            <person name="Hahn Y."/>
            <person name="Chung J.H."/>
        </authorList>
    </citation>
    <scope>NUCLEOTIDE SEQUENCE [GENOMIC DNA / MRNA] (ISOFORM 1)</scope>
</reference>
<reference key="2">
    <citation type="submission" date="2003-05" db="EMBL/GenBank/DDBJ databases">
        <title>Genomic sequence analysis in the mouse T-complex region.</title>
        <authorList>
            <person name="Brathwaite M."/>
            <person name="Waeltz P."/>
            <person name="Schlessinger D."/>
            <person name="Nagaraja R."/>
        </authorList>
    </citation>
    <scope>NUCLEOTIDE SEQUENCE [LARGE SCALE GENOMIC DNA]</scope>
    <source>
        <strain>C57BL/6J</strain>
    </source>
</reference>
<reference key="3">
    <citation type="journal article" date="2004" name="Genome Res.">
        <title>The status, quality, and expansion of the NIH full-length cDNA project: the Mammalian Gene Collection (MGC).</title>
        <authorList>
            <consortium name="The MGC Project Team"/>
        </authorList>
    </citation>
    <scope>NUCLEOTIDE SEQUENCE [LARGE SCALE MRNA] OF 8-498 (ISOFORM 2)</scope>
    <scope>NUCLEOTIDE SEQUENCE [LARGE SCALE MRNA] OF 53-498 (ISOFORM 1)</scope>
    <source>
        <strain>FVB/N</strain>
        <tissue>Mammary tumor</tissue>
    </source>
</reference>
<reference key="4">
    <citation type="journal article" date="2007" name="Circulation">
        <title>A secretion trap screen in yeast identifies protease inhibitor 16 as a novel antihypertrophic protein secreted from the heart.</title>
        <authorList>
            <person name="Frost R.J."/>
            <person name="Engelhardt S."/>
        </authorList>
    </citation>
    <scope>FUNCTION</scope>
    <scope>IDENTIFICATION OF ISOFORM 2</scope>
    <scope>SUBCELLULAR LOCATION</scope>
    <scope>TISSUE SPECIFICITY</scope>
    <scope>INDUCTION</scope>
    <scope>GLYCOSYLATION</scope>
</reference>